<sequence>MLENLQGKFLIATPEIDDDYFDRTVIYICEHNSNGAMGLVINTPTDLSVLELITRMDFQMANQRNYHKDQMVLSGGPVSQDRGFIIHTKTEQEFLHSYRVTDNILLTTSGDVLDSLGKPEAPEKFIVCLGCATWKPEQLEQEIARNYWLISEANDKTLFETGYLERWVEANEMLGISGVLARAGRA</sequence>
<evidence type="ECO:0000255" key="1">
    <source>
        <dbReference type="HAMAP-Rule" id="MF_00758"/>
    </source>
</evidence>
<reference key="1">
    <citation type="journal article" date="2008" name="J. Bacteriol.">
        <title>The complete genome sequence of Actinobacillus pleuropneumoniae L20 (serotype 5b).</title>
        <authorList>
            <person name="Foote S.J."/>
            <person name="Bosse J.T."/>
            <person name="Bouevitch A.B."/>
            <person name="Langford P.R."/>
            <person name="Young N.M."/>
            <person name="Nash J.H.E."/>
        </authorList>
    </citation>
    <scope>NUCLEOTIDE SEQUENCE [LARGE SCALE GENOMIC DNA]</scope>
    <source>
        <strain>L20</strain>
    </source>
</reference>
<accession>A3MYV4</accession>
<protein>
    <recommendedName>
        <fullName evidence="1">UPF0301 protein APL_0232</fullName>
    </recommendedName>
</protein>
<dbReference type="EMBL" id="CP000569">
    <property type="protein sequence ID" value="ABN73340.1"/>
    <property type="molecule type" value="Genomic_DNA"/>
</dbReference>
<dbReference type="RefSeq" id="WP_005596086.1">
    <property type="nucleotide sequence ID" value="NC_009053.1"/>
</dbReference>
<dbReference type="SMR" id="A3MYV4"/>
<dbReference type="STRING" id="416269.APL_0232"/>
<dbReference type="EnsemblBacteria" id="ABN73340">
    <property type="protein sequence ID" value="ABN73340"/>
    <property type="gene ID" value="APL_0232"/>
</dbReference>
<dbReference type="KEGG" id="apl:APL_0232"/>
<dbReference type="eggNOG" id="COG1678">
    <property type="taxonomic scope" value="Bacteria"/>
</dbReference>
<dbReference type="HOGENOM" id="CLU_057596_1_0_6"/>
<dbReference type="Proteomes" id="UP000001432">
    <property type="component" value="Chromosome"/>
</dbReference>
<dbReference type="GO" id="GO:0005829">
    <property type="term" value="C:cytosol"/>
    <property type="evidence" value="ECO:0007669"/>
    <property type="project" value="TreeGrafter"/>
</dbReference>
<dbReference type="Gene3D" id="3.40.1740.10">
    <property type="entry name" value="VC0467-like"/>
    <property type="match status" value="1"/>
</dbReference>
<dbReference type="Gene3D" id="3.30.70.1300">
    <property type="entry name" value="VC0467-like domains"/>
    <property type="match status" value="1"/>
</dbReference>
<dbReference type="HAMAP" id="MF_00758">
    <property type="entry name" value="UPF0301"/>
    <property type="match status" value="1"/>
</dbReference>
<dbReference type="InterPro" id="IPR003774">
    <property type="entry name" value="AlgH-like"/>
</dbReference>
<dbReference type="NCBIfam" id="NF001266">
    <property type="entry name" value="PRK00228.1-1"/>
    <property type="match status" value="1"/>
</dbReference>
<dbReference type="PANTHER" id="PTHR30327">
    <property type="entry name" value="UNCHARACTERIZED PROTEIN YQGE"/>
    <property type="match status" value="1"/>
</dbReference>
<dbReference type="PANTHER" id="PTHR30327:SF1">
    <property type="entry name" value="UPF0301 PROTEIN YQGE"/>
    <property type="match status" value="1"/>
</dbReference>
<dbReference type="Pfam" id="PF02622">
    <property type="entry name" value="DUF179"/>
    <property type="match status" value="1"/>
</dbReference>
<dbReference type="SUPFAM" id="SSF143456">
    <property type="entry name" value="VC0467-like"/>
    <property type="match status" value="1"/>
</dbReference>
<keyword id="KW-1185">Reference proteome</keyword>
<organism>
    <name type="scientific">Actinobacillus pleuropneumoniae serotype 5b (strain L20)</name>
    <dbReference type="NCBI Taxonomy" id="416269"/>
    <lineage>
        <taxon>Bacteria</taxon>
        <taxon>Pseudomonadati</taxon>
        <taxon>Pseudomonadota</taxon>
        <taxon>Gammaproteobacteria</taxon>
        <taxon>Pasteurellales</taxon>
        <taxon>Pasteurellaceae</taxon>
        <taxon>Actinobacillus</taxon>
    </lineage>
</organism>
<comment type="similarity">
    <text evidence="1">Belongs to the UPF0301 (AlgH) family.</text>
</comment>
<feature type="chain" id="PRO_1000046638" description="UPF0301 protein APL_0232">
    <location>
        <begin position="1"/>
        <end position="186"/>
    </location>
</feature>
<name>Y232_ACTP2</name>
<gene>
    <name type="ordered locus">APL_0232</name>
</gene>
<proteinExistence type="inferred from homology"/>